<feature type="chain" id="PRO_0000349062" description="Heme A synthase">
    <location>
        <begin position="1"/>
        <end position="363"/>
    </location>
</feature>
<feature type="transmembrane region" description="Helical" evidence="1">
    <location>
        <begin position="21"/>
        <end position="41"/>
    </location>
</feature>
<feature type="transmembrane region" description="Helical" evidence="1">
    <location>
        <begin position="107"/>
        <end position="127"/>
    </location>
</feature>
<feature type="transmembrane region" description="Helical" evidence="1">
    <location>
        <begin position="138"/>
        <end position="158"/>
    </location>
</feature>
<feature type="transmembrane region" description="Helical" evidence="1">
    <location>
        <begin position="174"/>
        <end position="194"/>
    </location>
</feature>
<feature type="transmembrane region" description="Helical" evidence="1">
    <location>
        <begin position="207"/>
        <end position="227"/>
    </location>
</feature>
<feature type="transmembrane region" description="Helical" evidence="1">
    <location>
        <begin position="268"/>
        <end position="288"/>
    </location>
</feature>
<feature type="transmembrane region" description="Helical" evidence="1">
    <location>
        <begin position="301"/>
        <end position="321"/>
    </location>
</feature>
<feature type="transmembrane region" description="Helical" evidence="1">
    <location>
        <begin position="323"/>
        <end position="343"/>
    </location>
</feature>
<feature type="binding site" description="axial binding residue" evidence="1">
    <location>
        <position position="270"/>
    </location>
    <ligand>
        <name>heme</name>
        <dbReference type="ChEBI" id="CHEBI:30413"/>
    </ligand>
    <ligandPart>
        <name>Fe</name>
        <dbReference type="ChEBI" id="CHEBI:18248"/>
    </ligandPart>
</feature>
<feature type="binding site" description="axial binding residue" evidence="1">
    <location>
        <position position="331"/>
    </location>
    <ligand>
        <name>heme</name>
        <dbReference type="ChEBI" id="CHEBI:30413"/>
    </ligand>
    <ligandPart>
        <name>Fe</name>
        <dbReference type="ChEBI" id="CHEBI:18248"/>
    </ligandPart>
</feature>
<accession>Q982X5</accession>
<evidence type="ECO:0000255" key="1">
    <source>
        <dbReference type="HAMAP-Rule" id="MF_01665"/>
    </source>
</evidence>
<evidence type="ECO:0000305" key="2"/>
<reference key="1">
    <citation type="journal article" date="2000" name="DNA Res.">
        <title>Complete genome structure of the nitrogen-fixing symbiotic bacterium Mesorhizobium loti.</title>
        <authorList>
            <person name="Kaneko T."/>
            <person name="Nakamura Y."/>
            <person name="Sato S."/>
            <person name="Asamizu E."/>
            <person name="Kato T."/>
            <person name="Sasamoto S."/>
            <person name="Watanabe A."/>
            <person name="Idesawa K."/>
            <person name="Ishikawa A."/>
            <person name="Kawashima K."/>
            <person name="Kimura T."/>
            <person name="Kishida Y."/>
            <person name="Kiyokawa C."/>
            <person name="Kohara M."/>
            <person name="Matsumoto M."/>
            <person name="Matsuno A."/>
            <person name="Mochizuki Y."/>
            <person name="Nakayama S."/>
            <person name="Nakazaki N."/>
            <person name="Shimpo S."/>
            <person name="Sugimoto M."/>
            <person name="Takeuchi C."/>
            <person name="Yamada M."/>
            <person name="Tabata S."/>
        </authorList>
    </citation>
    <scope>NUCLEOTIDE SEQUENCE [LARGE SCALE GENOMIC DNA]</scope>
    <source>
        <strain>LMG 29417 / CECT 9101 / MAFF 303099</strain>
    </source>
</reference>
<dbReference type="EC" id="1.17.99.9" evidence="1"/>
<dbReference type="EMBL" id="BA000012">
    <property type="protein sequence ID" value="BAB54331.1"/>
    <property type="status" value="ALT_INIT"/>
    <property type="molecule type" value="Genomic_DNA"/>
</dbReference>
<dbReference type="RefSeq" id="WP_080512007.1">
    <property type="nucleotide sequence ID" value="NC_002678.2"/>
</dbReference>
<dbReference type="SMR" id="Q982X5"/>
<dbReference type="KEGG" id="mlo:mlr8450"/>
<dbReference type="PATRIC" id="fig|266835.9.peg.6760"/>
<dbReference type="eggNOG" id="COG1612">
    <property type="taxonomic scope" value="Bacteria"/>
</dbReference>
<dbReference type="HOGENOM" id="CLU_017627_0_0_5"/>
<dbReference type="UniPathway" id="UPA00269">
    <property type="reaction ID" value="UER00713"/>
</dbReference>
<dbReference type="Proteomes" id="UP000000552">
    <property type="component" value="Chromosome"/>
</dbReference>
<dbReference type="GO" id="GO:0005886">
    <property type="term" value="C:plasma membrane"/>
    <property type="evidence" value="ECO:0007669"/>
    <property type="project" value="UniProtKB-SubCell"/>
</dbReference>
<dbReference type="GO" id="GO:0046872">
    <property type="term" value="F:metal ion binding"/>
    <property type="evidence" value="ECO:0007669"/>
    <property type="project" value="UniProtKB-KW"/>
</dbReference>
<dbReference type="GO" id="GO:0016653">
    <property type="term" value="F:oxidoreductase activity, acting on NAD(P)H, heme protein as acceptor"/>
    <property type="evidence" value="ECO:0007669"/>
    <property type="project" value="InterPro"/>
</dbReference>
<dbReference type="GO" id="GO:0006784">
    <property type="term" value="P:heme A biosynthetic process"/>
    <property type="evidence" value="ECO:0007669"/>
    <property type="project" value="UniProtKB-UniRule"/>
</dbReference>
<dbReference type="HAMAP" id="MF_01665">
    <property type="entry name" value="HemeA_synth_type2"/>
    <property type="match status" value="1"/>
</dbReference>
<dbReference type="InterPro" id="IPR003780">
    <property type="entry name" value="COX15/CtaA_fam"/>
</dbReference>
<dbReference type="InterPro" id="IPR023754">
    <property type="entry name" value="HemeA_Synthase_type2"/>
</dbReference>
<dbReference type="PANTHER" id="PTHR23289">
    <property type="entry name" value="CYTOCHROME C OXIDASE ASSEMBLY PROTEIN COX15"/>
    <property type="match status" value="1"/>
</dbReference>
<dbReference type="PANTHER" id="PTHR23289:SF2">
    <property type="entry name" value="CYTOCHROME C OXIDASE ASSEMBLY PROTEIN COX15 HOMOLOG"/>
    <property type="match status" value="1"/>
</dbReference>
<dbReference type="Pfam" id="PF02628">
    <property type="entry name" value="COX15-CtaA"/>
    <property type="match status" value="1"/>
</dbReference>
<name>CTAA_RHILO</name>
<proteinExistence type="inferred from homology"/>
<sequence>MAAISASAPYVARDRDLRNRALVRGWLYVVLLVLFALVLVGGATRLTESGLSITQWQPIHGVIPPLNDAEWQEEFQRYQQIPQYTELNKGMSIEAFKSIFWWEWAHRLLARSVGLVFALPLLFFWVSRRIERGLGPKLVGILLLGGLQGAIGWWMVASGLVDRVSVSQYRLATHLTLAALIFTATMVVARGLAPHSEPAADRSTQRLAGFIVLLALIQIYLGGLVAGLDAGLSYNTWPLMDGKIIPGDLLILEPAWRNFFESPKTVQFVHRLGAYTVFAVALWHMIATRRRLPGSTHARRATLLFVLVLVQASIGIGTLLMQVPLHMALTHQGFALIVLGFAAAHWRGTKGAYPLPQEIVLRS</sequence>
<keyword id="KW-1003">Cell membrane</keyword>
<keyword id="KW-0350">Heme biosynthesis</keyword>
<keyword id="KW-0408">Iron</keyword>
<keyword id="KW-0472">Membrane</keyword>
<keyword id="KW-0479">Metal-binding</keyword>
<keyword id="KW-0560">Oxidoreductase</keyword>
<keyword id="KW-0812">Transmembrane</keyword>
<keyword id="KW-1133">Transmembrane helix</keyword>
<protein>
    <recommendedName>
        <fullName evidence="1">Heme A synthase</fullName>
        <shortName evidence="1">HAS</shortName>
        <ecNumber evidence="1">1.17.99.9</ecNumber>
    </recommendedName>
    <alternativeName>
        <fullName evidence="1">Cytochrome aa3-controlling protein</fullName>
    </alternativeName>
</protein>
<organism>
    <name type="scientific">Mesorhizobium japonicum (strain LMG 29417 / CECT 9101 / MAFF 303099)</name>
    <name type="common">Mesorhizobium loti (strain MAFF 303099)</name>
    <dbReference type="NCBI Taxonomy" id="266835"/>
    <lineage>
        <taxon>Bacteria</taxon>
        <taxon>Pseudomonadati</taxon>
        <taxon>Pseudomonadota</taxon>
        <taxon>Alphaproteobacteria</taxon>
        <taxon>Hyphomicrobiales</taxon>
        <taxon>Phyllobacteriaceae</taxon>
        <taxon>Mesorhizobium</taxon>
    </lineage>
</organism>
<gene>
    <name evidence="1" type="primary">ctaA</name>
    <name type="ordered locus">mlr8450</name>
</gene>
<comment type="function">
    <text evidence="1">Catalyzes the conversion of heme O to heme A by two successive hydroxylations of the methyl group at C8. The first hydroxylation forms heme I, the second hydroxylation results in an unstable dihydroxymethyl group, which spontaneously dehydrates, resulting in the formyl group of heme A.</text>
</comment>
<comment type="catalytic activity">
    <reaction evidence="1">
        <text>Fe(II)-heme o + 2 A + H2O = Fe(II)-heme a + 2 AH2</text>
        <dbReference type="Rhea" id="RHEA:63388"/>
        <dbReference type="ChEBI" id="CHEBI:13193"/>
        <dbReference type="ChEBI" id="CHEBI:15377"/>
        <dbReference type="ChEBI" id="CHEBI:17499"/>
        <dbReference type="ChEBI" id="CHEBI:60530"/>
        <dbReference type="ChEBI" id="CHEBI:61715"/>
        <dbReference type="EC" id="1.17.99.9"/>
    </reaction>
    <physiologicalReaction direction="left-to-right" evidence="1">
        <dbReference type="Rhea" id="RHEA:63389"/>
    </physiologicalReaction>
</comment>
<comment type="cofactor">
    <cofactor evidence="1">
        <name>heme b</name>
        <dbReference type="ChEBI" id="CHEBI:60344"/>
    </cofactor>
</comment>
<comment type="pathway">
    <text evidence="1">Porphyrin-containing compound metabolism; heme A biosynthesis; heme A from heme O: step 1/1.</text>
</comment>
<comment type="subunit">
    <text evidence="1">Interacts with CtaB.</text>
</comment>
<comment type="subcellular location">
    <subcellularLocation>
        <location evidence="1">Cell membrane</location>
        <topology evidence="1">Multi-pass membrane protein</topology>
    </subcellularLocation>
</comment>
<comment type="similarity">
    <text evidence="1">Belongs to the COX15/CtaA family. Type 2 subfamily.</text>
</comment>
<comment type="sequence caution" evidence="2">
    <conflict type="erroneous initiation">
        <sequence resource="EMBL-CDS" id="BAB54331"/>
    </conflict>
</comment>